<feature type="chain" id="PRO_1000081369" description="L-lactate dehydrogenase">
    <location>
        <begin position="1"/>
        <end position="328"/>
    </location>
</feature>
<feature type="active site" description="Proton acceptor" evidence="1">
    <location>
        <position position="181"/>
    </location>
</feature>
<feature type="binding site" evidence="1">
    <location>
        <position position="18"/>
    </location>
    <ligand>
        <name>NAD(+)</name>
        <dbReference type="ChEBI" id="CHEBI:57540"/>
    </ligand>
</feature>
<feature type="binding site" evidence="1">
    <location>
        <position position="39"/>
    </location>
    <ligand>
        <name>NAD(+)</name>
        <dbReference type="ChEBI" id="CHEBI:57540"/>
    </ligand>
</feature>
<feature type="binding site" evidence="1">
    <location>
        <position position="46"/>
    </location>
    <ligand>
        <name>NAD(+)</name>
        <dbReference type="ChEBI" id="CHEBI:57540"/>
    </ligand>
</feature>
<feature type="binding site" evidence="1">
    <location>
        <position position="71"/>
    </location>
    <ligand>
        <name>NAD(+)</name>
        <dbReference type="ChEBI" id="CHEBI:57540"/>
    </ligand>
</feature>
<feature type="binding site" evidence="1">
    <location>
        <begin position="85"/>
        <end position="86"/>
    </location>
    <ligand>
        <name>NAD(+)</name>
        <dbReference type="ChEBI" id="CHEBI:57540"/>
    </ligand>
</feature>
<feature type="binding site" evidence="1">
    <location>
        <position position="88"/>
    </location>
    <ligand>
        <name>substrate</name>
    </ligand>
</feature>
<feature type="binding site" evidence="1">
    <location>
        <position position="94"/>
    </location>
    <ligand>
        <name>substrate</name>
    </ligand>
</feature>
<feature type="binding site" evidence="1">
    <location>
        <position position="107"/>
    </location>
    <ligand>
        <name>NAD(+)</name>
        <dbReference type="ChEBI" id="CHEBI:57540"/>
    </ligand>
</feature>
<feature type="binding site" evidence="1">
    <location>
        <begin position="124"/>
        <end position="126"/>
    </location>
    <ligand>
        <name>NAD(+)</name>
        <dbReference type="ChEBI" id="CHEBI:57540"/>
    </ligand>
</feature>
<feature type="binding site" evidence="1">
    <location>
        <begin position="126"/>
        <end position="129"/>
    </location>
    <ligand>
        <name>substrate</name>
    </ligand>
</feature>
<feature type="binding site" evidence="1">
    <location>
        <position position="149"/>
    </location>
    <ligand>
        <name>NAD(+)</name>
        <dbReference type="ChEBI" id="CHEBI:57540"/>
    </ligand>
</feature>
<feature type="binding site" evidence="1">
    <location>
        <begin position="154"/>
        <end position="157"/>
    </location>
    <ligand>
        <name>substrate</name>
    </ligand>
</feature>
<feature type="binding site" evidence="1">
    <location>
        <position position="159"/>
    </location>
    <ligand>
        <name>beta-D-fructose 1,6-bisphosphate</name>
        <dbReference type="ChEBI" id="CHEBI:32966"/>
        <note>allosteric activator</note>
    </ligand>
</feature>
<feature type="binding site" evidence="1">
    <location>
        <position position="174"/>
    </location>
    <ligand>
        <name>beta-D-fructose 1,6-bisphosphate</name>
        <dbReference type="ChEBI" id="CHEBI:32966"/>
        <note>allosteric activator</note>
    </ligand>
</feature>
<feature type="binding site" evidence="1">
    <location>
        <position position="235"/>
    </location>
    <ligand>
        <name>substrate</name>
    </ligand>
</feature>
<feature type="modified residue" description="Phosphotyrosine" evidence="1">
    <location>
        <position position="226"/>
    </location>
</feature>
<dbReference type="EC" id="1.1.1.27" evidence="1"/>
<dbReference type="EMBL" id="CP000725">
    <property type="protein sequence ID" value="ABV11002.1"/>
    <property type="molecule type" value="Genomic_DNA"/>
</dbReference>
<dbReference type="RefSeq" id="WP_012000632.1">
    <property type="nucleotide sequence ID" value="NC_009785.1"/>
</dbReference>
<dbReference type="SMR" id="A8AXK9"/>
<dbReference type="STRING" id="467705.SGO_1232"/>
<dbReference type="KEGG" id="sgo:SGO_1232"/>
<dbReference type="eggNOG" id="COG0039">
    <property type="taxonomic scope" value="Bacteria"/>
</dbReference>
<dbReference type="HOGENOM" id="CLU_045401_1_1_9"/>
<dbReference type="UniPathway" id="UPA00554">
    <property type="reaction ID" value="UER00611"/>
</dbReference>
<dbReference type="Proteomes" id="UP000001131">
    <property type="component" value="Chromosome"/>
</dbReference>
<dbReference type="GO" id="GO:0005737">
    <property type="term" value="C:cytoplasm"/>
    <property type="evidence" value="ECO:0007669"/>
    <property type="project" value="UniProtKB-SubCell"/>
</dbReference>
<dbReference type="GO" id="GO:0004459">
    <property type="term" value="F:L-lactate dehydrogenase activity"/>
    <property type="evidence" value="ECO:0007669"/>
    <property type="project" value="UniProtKB-UniRule"/>
</dbReference>
<dbReference type="GO" id="GO:0006096">
    <property type="term" value="P:glycolytic process"/>
    <property type="evidence" value="ECO:0007669"/>
    <property type="project" value="UniProtKB-UniRule"/>
</dbReference>
<dbReference type="GO" id="GO:0006089">
    <property type="term" value="P:lactate metabolic process"/>
    <property type="evidence" value="ECO:0007669"/>
    <property type="project" value="TreeGrafter"/>
</dbReference>
<dbReference type="CDD" id="cd05291">
    <property type="entry name" value="HicDH_like"/>
    <property type="match status" value="1"/>
</dbReference>
<dbReference type="FunFam" id="3.40.50.720:FF:000018">
    <property type="entry name" value="Malate dehydrogenase"/>
    <property type="match status" value="1"/>
</dbReference>
<dbReference type="Gene3D" id="3.90.110.10">
    <property type="entry name" value="Lactate dehydrogenase/glycoside hydrolase, family 4, C-terminal"/>
    <property type="match status" value="1"/>
</dbReference>
<dbReference type="Gene3D" id="3.40.50.720">
    <property type="entry name" value="NAD(P)-binding Rossmann-like Domain"/>
    <property type="match status" value="1"/>
</dbReference>
<dbReference type="HAMAP" id="MF_00488">
    <property type="entry name" value="Lactate_dehydrog"/>
    <property type="match status" value="1"/>
</dbReference>
<dbReference type="InterPro" id="IPR001557">
    <property type="entry name" value="L-lactate/malate_DH"/>
</dbReference>
<dbReference type="InterPro" id="IPR011304">
    <property type="entry name" value="L-lactate_DH"/>
</dbReference>
<dbReference type="InterPro" id="IPR018177">
    <property type="entry name" value="L-lactate_DH_AS"/>
</dbReference>
<dbReference type="InterPro" id="IPR022383">
    <property type="entry name" value="Lactate/malate_DH_C"/>
</dbReference>
<dbReference type="InterPro" id="IPR001236">
    <property type="entry name" value="Lactate/malate_DH_N"/>
</dbReference>
<dbReference type="InterPro" id="IPR015955">
    <property type="entry name" value="Lactate_DH/Glyco_Ohase_4_C"/>
</dbReference>
<dbReference type="InterPro" id="IPR036291">
    <property type="entry name" value="NAD(P)-bd_dom_sf"/>
</dbReference>
<dbReference type="NCBIfam" id="TIGR01771">
    <property type="entry name" value="L-LDH-NAD"/>
    <property type="match status" value="1"/>
</dbReference>
<dbReference type="NCBIfam" id="NF000824">
    <property type="entry name" value="PRK00066.1"/>
    <property type="match status" value="1"/>
</dbReference>
<dbReference type="PANTHER" id="PTHR43128">
    <property type="entry name" value="L-2-HYDROXYCARBOXYLATE DEHYDROGENASE (NAD(P)(+))"/>
    <property type="match status" value="1"/>
</dbReference>
<dbReference type="PANTHER" id="PTHR43128:SF16">
    <property type="entry name" value="L-LACTATE DEHYDROGENASE"/>
    <property type="match status" value="1"/>
</dbReference>
<dbReference type="Pfam" id="PF02866">
    <property type="entry name" value="Ldh_1_C"/>
    <property type="match status" value="1"/>
</dbReference>
<dbReference type="Pfam" id="PF00056">
    <property type="entry name" value="Ldh_1_N"/>
    <property type="match status" value="1"/>
</dbReference>
<dbReference type="PIRSF" id="PIRSF000102">
    <property type="entry name" value="Lac_mal_DH"/>
    <property type="match status" value="1"/>
</dbReference>
<dbReference type="PRINTS" id="PR00086">
    <property type="entry name" value="LLDHDRGNASE"/>
</dbReference>
<dbReference type="SUPFAM" id="SSF56327">
    <property type="entry name" value="LDH C-terminal domain-like"/>
    <property type="match status" value="1"/>
</dbReference>
<dbReference type="SUPFAM" id="SSF51735">
    <property type="entry name" value="NAD(P)-binding Rossmann-fold domains"/>
    <property type="match status" value="1"/>
</dbReference>
<dbReference type="PROSITE" id="PS00064">
    <property type="entry name" value="L_LDH"/>
    <property type="match status" value="1"/>
</dbReference>
<gene>
    <name evidence="1" type="primary">ldh</name>
    <name type="ordered locus">SGO_1232</name>
</gene>
<name>LDH_STRGC</name>
<protein>
    <recommendedName>
        <fullName evidence="1">L-lactate dehydrogenase</fullName>
        <shortName evidence="1">L-LDH</shortName>
        <ecNumber evidence="1">1.1.1.27</ecNumber>
    </recommendedName>
</protein>
<keyword id="KW-0021">Allosteric enzyme</keyword>
<keyword id="KW-0963">Cytoplasm</keyword>
<keyword id="KW-0520">NAD</keyword>
<keyword id="KW-0560">Oxidoreductase</keyword>
<keyword id="KW-0597">Phosphoprotein</keyword>
<keyword id="KW-1185">Reference proteome</keyword>
<comment type="function">
    <text evidence="1">Catalyzes the conversion of lactate to pyruvate.</text>
</comment>
<comment type="catalytic activity">
    <reaction evidence="1">
        <text>(S)-lactate + NAD(+) = pyruvate + NADH + H(+)</text>
        <dbReference type="Rhea" id="RHEA:23444"/>
        <dbReference type="ChEBI" id="CHEBI:15361"/>
        <dbReference type="ChEBI" id="CHEBI:15378"/>
        <dbReference type="ChEBI" id="CHEBI:16651"/>
        <dbReference type="ChEBI" id="CHEBI:57540"/>
        <dbReference type="ChEBI" id="CHEBI:57945"/>
        <dbReference type="EC" id="1.1.1.27"/>
    </reaction>
</comment>
<comment type="activity regulation">
    <text evidence="1">Allosterically activated by fructose 1,6-bisphosphate (FBP).</text>
</comment>
<comment type="pathway">
    <text evidence="1">Fermentation; pyruvate fermentation to lactate; (S)-lactate from pyruvate: step 1/1.</text>
</comment>
<comment type="subunit">
    <text evidence="1">Homotetramer.</text>
</comment>
<comment type="subcellular location">
    <subcellularLocation>
        <location evidence="1">Cytoplasm</location>
    </subcellularLocation>
</comment>
<comment type="similarity">
    <text evidence="1">Belongs to the LDH/MDH superfamily. LDH family.</text>
</comment>
<reference key="1">
    <citation type="journal article" date="2007" name="J. Bacteriol.">
        <title>Genome-wide transcriptional changes in Streptococcus gordonii in response to competence signaling peptide.</title>
        <authorList>
            <person name="Vickerman M.M."/>
            <person name="Iobst S."/>
            <person name="Jesionowski A.M."/>
            <person name="Gill S.R."/>
        </authorList>
    </citation>
    <scope>NUCLEOTIDE SEQUENCE [LARGE SCALE GENOMIC DNA]</scope>
    <source>
        <strain>Challis / ATCC 35105 / BCRC 15272 / CH1 / DL1 / V288</strain>
    </source>
</reference>
<sequence length="328" mass="35267">MTSTKQHKKVILVGDGAVGSSYAFALVNQGIAQELGIIEIPQLHEKAVGDALDLSHALAFTSPKKIYAAKYEDCADADLVVITAGAPQKPGETRLDLVGKNLAINKSIVTQVVASGFDGIFLVAANPVDVLTYSTWKFSGFPKERVIGSGTSLDSARFRQALAEKLDVDARSVHAYIMGEHGDSEFAVWSHANIAGVNLEEFLKDTQNVQEAELIELFEGVRDAAYTIINKKGATYYGIAVALARITKAILDDENAVLPLSVFQEGQYGVKNVFIGQPAVVGAHGIVRPVNIPLNDAETQKMQASAKELQAIIDEAWKNPEFQAASKN</sequence>
<evidence type="ECO:0000255" key="1">
    <source>
        <dbReference type="HAMAP-Rule" id="MF_00488"/>
    </source>
</evidence>
<accession>A8AXK9</accession>
<organism>
    <name type="scientific">Streptococcus gordonii (strain Challis / ATCC 35105 / BCRC 15272 / CH1 / DL1 / V288)</name>
    <dbReference type="NCBI Taxonomy" id="467705"/>
    <lineage>
        <taxon>Bacteria</taxon>
        <taxon>Bacillati</taxon>
        <taxon>Bacillota</taxon>
        <taxon>Bacilli</taxon>
        <taxon>Lactobacillales</taxon>
        <taxon>Streptococcaceae</taxon>
        <taxon>Streptococcus</taxon>
    </lineage>
</organism>
<proteinExistence type="inferred from homology"/>